<accession>A9M490</accession>
<evidence type="ECO:0000255" key="1">
    <source>
        <dbReference type="HAMAP-Rule" id="MF_00050"/>
    </source>
</evidence>
<sequence length="284" mass="30271">MAEITAKMVADLRAATGLGMMECKKALVEAEGNFDKAEEILRIKSGAKAGKLAGRTAAEGVLAYAINGNVGALVEVNCETDFVAKDAGFVEFANFVAKTAAEKKPASVEELSELVEAERKAIIAKLGENMSVRRFQVIDTANQLVAYIHGALATEGVLVEYKGSEDVARKIGMHIVAAKPQCVSEAEVDAETVEKERHIYTEQAIASGKPADIAAKMVEGRIRKFLAEITLNGQAFVMNPDQTVAQFAKENGTEVVSFVRYKVGDGIEKAVVDYAAEVAAAAKV</sequence>
<organism>
    <name type="scientific">Neisseria meningitidis serogroup C (strain 053442)</name>
    <dbReference type="NCBI Taxonomy" id="374833"/>
    <lineage>
        <taxon>Bacteria</taxon>
        <taxon>Pseudomonadati</taxon>
        <taxon>Pseudomonadota</taxon>
        <taxon>Betaproteobacteria</taxon>
        <taxon>Neisseriales</taxon>
        <taxon>Neisseriaceae</taxon>
        <taxon>Neisseria</taxon>
    </lineage>
</organism>
<name>EFTS_NEIM0</name>
<gene>
    <name evidence="1" type="primary">tsf</name>
    <name type="ordered locus">NMCC_2066</name>
</gene>
<keyword id="KW-0963">Cytoplasm</keyword>
<keyword id="KW-0251">Elongation factor</keyword>
<keyword id="KW-0648">Protein biosynthesis</keyword>
<dbReference type="EMBL" id="CP000381">
    <property type="protein sequence ID" value="ABX74184.1"/>
    <property type="molecule type" value="Genomic_DNA"/>
</dbReference>
<dbReference type="RefSeq" id="WP_002215087.1">
    <property type="nucleotide sequence ID" value="NC_010120.1"/>
</dbReference>
<dbReference type="SMR" id="A9M490"/>
<dbReference type="KEGG" id="nmn:NMCC_2066"/>
<dbReference type="HOGENOM" id="CLU_047155_0_2_4"/>
<dbReference type="Proteomes" id="UP000001177">
    <property type="component" value="Chromosome"/>
</dbReference>
<dbReference type="GO" id="GO:0005737">
    <property type="term" value="C:cytoplasm"/>
    <property type="evidence" value="ECO:0007669"/>
    <property type="project" value="UniProtKB-SubCell"/>
</dbReference>
<dbReference type="GO" id="GO:0003746">
    <property type="term" value="F:translation elongation factor activity"/>
    <property type="evidence" value="ECO:0007669"/>
    <property type="project" value="UniProtKB-UniRule"/>
</dbReference>
<dbReference type="CDD" id="cd14275">
    <property type="entry name" value="UBA_EF-Ts"/>
    <property type="match status" value="1"/>
</dbReference>
<dbReference type="FunFam" id="1.10.286.20:FF:000001">
    <property type="entry name" value="Elongation factor Ts"/>
    <property type="match status" value="1"/>
</dbReference>
<dbReference type="FunFam" id="1.10.8.10:FF:000001">
    <property type="entry name" value="Elongation factor Ts"/>
    <property type="match status" value="1"/>
</dbReference>
<dbReference type="FunFam" id="3.30.479.20:FF:000001">
    <property type="entry name" value="Elongation factor Ts"/>
    <property type="match status" value="1"/>
</dbReference>
<dbReference type="Gene3D" id="1.10.286.20">
    <property type="match status" value="1"/>
</dbReference>
<dbReference type="Gene3D" id="1.10.8.10">
    <property type="entry name" value="DNA helicase RuvA subunit, C-terminal domain"/>
    <property type="match status" value="1"/>
</dbReference>
<dbReference type="Gene3D" id="3.30.479.20">
    <property type="entry name" value="Elongation factor Ts, dimerisation domain"/>
    <property type="match status" value="2"/>
</dbReference>
<dbReference type="HAMAP" id="MF_00050">
    <property type="entry name" value="EF_Ts"/>
    <property type="match status" value="1"/>
</dbReference>
<dbReference type="InterPro" id="IPR036402">
    <property type="entry name" value="EF-Ts_dimer_sf"/>
</dbReference>
<dbReference type="InterPro" id="IPR001816">
    <property type="entry name" value="Transl_elong_EFTs/EF1B"/>
</dbReference>
<dbReference type="InterPro" id="IPR014039">
    <property type="entry name" value="Transl_elong_EFTs/EF1B_dimer"/>
</dbReference>
<dbReference type="InterPro" id="IPR018101">
    <property type="entry name" value="Transl_elong_Ts_CS"/>
</dbReference>
<dbReference type="InterPro" id="IPR009060">
    <property type="entry name" value="UBA-like_sf"/>
</dbReference>
<dbReference type="NCBIfam" id="TIGR00116">
    <property type="entry name" value="tsf"/>
    <property type="match status" value="1"/>
</dbReference>
<dbReference type="PANTHER" id="PTHR11741">
    <property type="entry name" value="ELONGATION FACTOR TS"/>
    <property type="match status" value="1"/>
</dbReference>
<dbReference type="PANTHER" id="PTHR11741:SF0">
    <property type="entry name" value="ELONGATION FACTOR TS, MITOCHONDRIAL"/>
    <property type="match status" value="1"/>
</dbReference>
<dbReference type="Pfam" id="PF00889">
    <property type="entry name" value="EF_TS"/>
    <property type="match status" value="1"/>
</dbReference>
<dbReference type="SUPFAM" id="SSF54713">
    <property type="entry name" value="Elongation factor Ts (EF-Ts), dimerisation domain"/>
    <property type="match status" value="2"/>
</dbReference>
<dbReference type="SUPFAM" id="SSF46934">
    <property type="entry name" value="UBA-like"/>
    <property type="match status" value="1"/>
</dbReference>
<dbReference type="PROSITE" id="PS01126">
    <property type="entry name" value="EF_TS_1"/>
    <property type="match status" value="1"/>
</dbReference>
<dbReference type="PROSITE" id="PS01127">
    <property type="entry name" value="EF_TS_2"/>
    <property type="match status" value="1"/>
</dbReference>
<feature type="chain" id="PRO_1000074870" description="Elongation factor Ts">
    <location>
        <begin position="1"/>
        <end position="284"/>
    </location>
</feature>
<feature type="region of interest" description="Involved in Mg(2+) ion dislocation from EF-Tu" evidence="1">
    <location>
        <begin position="80"/>
        <end position="83"/>
    </location>
</feature>
<protein>
    <recommendedName>
        <fullName evidence="1">Elongation factor Ts</fullName>
        <shortName evidence="1">EF-Ts</shortName>
    </recommendedName>
</protein>
<proteinExistence type="inferred from homology"/>
<reference key="1">
    <citation type="journal article" date="2008" name="Genomics">
        <title>Characterization of ST-4821 complex, a unique Neisseria meningitidis clone.</title>
        <authorList>
            <person name="Peng J."/>
            <person name="Yang L."/>
            <person name="Yang F."/>
            <person name="Yang J."/>
            <person name="Yan Y."/>
            <person name="Nie H."/>
            <person name="Zhang X."/>
            <person name="Xiong Z."/>
            <person name="Jiang Y."/>
            <person name="Cheng F."/>
            <person name="Xu X."/>
            <person name="Chen S."/>
            <person name="Sun L."/>
            <person name="Li W."/>
            <person name="Shen Y."/>
            <person name="Shao Z."/>
            <person name="Liang X."/>
            <person name="Xu J."/>
            <person name="Jin Q."/>
        </authorList>
    </citation>
    <scope>NUCLEOTIDE SEQUENCE [LARGE SCALE GENOMIC DNA]</scope>
    <source>
        <strain>053442</strain>
    </source>
</reference>
<comment type="function">
    <text evidence="1">Associates with the EF-Tu.GDP complex and induces the exchange of GDP to GTP. It remains bound to the aminoacyl-tRNA.EF-Tu.GTP complex up to the GTP hydrolysis stage on the ribosome.</text>
</comment>
<comment type="subcellular location">
    <subcellularLocation>
        <location evidence="1">Cytoplasm</location>
    </subcellularLocation>
</comment>
<comment type="similarity">
    <text evidence="1">Belongs to the EF-Ts family.</text>
</comment>